<proteinExistence type="inferred from homology"/>
<organism>
    <name type="scientific">Streptomyces avermitilis (strain ATCC 31267 / DSM 46492 / JCM 5070 / NBRC 14893 / NCIMB 12804 / NRRL 8165 / MA-4680)</name>
    <dbReference type="NCBI Taxonomy" id="227882"/>
    <lineage>
        <taxon>Bacteria</taxon>
        <taxon>Bacillati</taxon>
        <taxon>Actinomycetota</taxon>
        <taxon>Actinomycetes</taxon>
        <taxon>Kitasatosporales</taxon>
        <taxon>Streptomycetaceae</taxon>
        <taxon>Streptomyces</taxon>
    </lineage>
</organism>
<accession>Q82KF0</accession>
<dbReference type="EC" id="3.1.26.4" evidence="1"/>
<dbReference type="EMBL" id="BA000030">
    <property type="protein sequence ID" value="BAC70164.1"/>
    <property type="molecule type" value="Genomic_DNA"/>
</dbReference>
<dbReference type="RefSeq" id="WP_010983890.1">
    <property type="nucleotide sequence ID" value="NZ_JZJK01000086.1"/>
</dbReference>
<dbReference type="SMR" id="Q82KF0"/>
<dbReference type="GeneID" id="41539540"/>
<dbReference type="KEGG" id="sma:SAVERM_2453"/>
<dbReference type="eggNOG" id="COG0164">
    <property type="taxonomic scope" value="Bacteria"/>
</dbReference>
<dbReference type="HOGENOM" id="CLU_036532_3_0_11"/>
<dbReference type="OrthoDB" id="9803420at2"/>
<dbReference type="Proteomes" id="UP000000428">
    <property type="component" value="Chromosome"/>
</dbReference>
<dbReference type="GO" id="GO:0005737">
    <property type="term" value="C:cytoplasm"/>
    <property type="evidence" value="ECO:0007669"/>
    <property type="project" value="UniProtKB-SubCell"/>
</dbReference>
<dbReference type="GO" id="GO:0032299">
    <property type="term" value="C:ribonuclease H2 complex"/>
    <property type="evidence" value="ECO:0007669"/>
    <property type="project" value="TreeGrafter"/>
</dbReference>
<dbReference type="GO" id="GO:0030145">
    <property type="term" value="F:manganese ion binding"/>
    <property type="evidence" value="ECO:0007669"/>
    <property type="project" value="UniProtKB-UniRule"/>
</dbReference>
<dbReference type="GO" id="GO:0003723">
    <property type="term" value="F:RNA binding"/>
    <property type="evidence" value="ECO:0007669"/>
    <property type="project" value="InterPro"/>
</dbReference>
<dbReference type="GO" id="GO:0004523">
    <property type="term" value="F:RNA-DNA hybrid ribonuclease activity"/>
    <property type="evidence" value="ECO:0007669"/>
    <property type="project" value="UniProtKB-UniRule"/>
</dbReference>
<dbReference type="GO" id="GO:0043137">
    <property type="term" value="P:DNA replication, removal of RNA primer"/>
    <property type="evidence" value="ECO:0007669"/>
    <property type="project" value="TreeGrafter"/>
</dbReference>
<dbReference type="GO" id="GO:0006298">
    <property type="term" value="P:mismatch repair"/>
    <property type="evidence" value="ECO:0007669"/>
    <property type="project" value="TreeGrafter"/>
</dbReference>
<dbReference type="CDD" id="cd07182">
    <property type="entry name" value="RNase_HII_bacteria_HII_like"/>
    <property type="match status" value="1"/>
</dbReference>
<dbReference type="FunFam" id="3.30.420.10:FF:000167">
    <property type="entry name" value="Ribonuclease HII"/>
    <property type="match status" value="1"/>
</dbReference>
<dbReference type="Gene3D" id="3.30.420.10">
    <property type="entry name" value="Ribonuclease H-like superfamily/Ribonuclease H"/>
    <property type="match status" value="1"/>
</dbReference>
<dbReference type="HAMAP" id="MF_00052_B">
    <property type="entry name" value="RNase_HII_B"/>
    <property type="match status" value="1"/>
</dbReference>
<dbReference type="InterPro" id="IPR022898">
    <property type="entry name" value="RNase_HII"/>
</dbReference>
<dbReference type="InterPro" id="IPR001352">
    <property type="entry name" value="RNase_HII/HIII"/>
</dbReference>
<dbReference type="InterPro" id="IPR024567">
    <property type="entry name" value="RNase_HII/HIII_dom"/>
</dbReference>
<dbReference type="InterPro" id="IPR012337">
    <property type="entry name" value="RNaseH-like_sf"/>
</dbReference>
<dbReference type="InterPro" id="IPR036397">
    <property type="entry name" value="RNaseH_sf"/>
</dbReference>
<dbReference type="NCBIfam" id="NF000595">
    <property type="entry name" value="PRK00015.1-3"/>
    <property type="match status" value="1"/>
</dbReference>
<dbReference type="PANTHER" id="PTHR10954">
    <property type="entry name" value="RIBONUCLEASE H2 SUBUNIT A"/>
    <property type="match status" value="1"/>
</dbReference>
<dbReference type="PANTHER" id="PTHR10954:SF18">
    <property type="entry name" value="RIBONUCLEASE HII"/>
    <property type="match status" value="1"/>
</dbReference>
<dbReference type="Pfam" id="PF01351">
    <property type="entry name" value="RNase_HII"/>
    <property type="match status" value="1"/>
</dbReference>
<dbReference type="SUPFAM" id="SSF53098">
    <property type="entry name" value="Ribonuclease H-like"/>
    <property type="match status" value="1"/>
</dbReference>
<dbReference type="PROSITE" id="PS51975">
    <property type="entry name" value="RNASE_H_2"/>
    <property type="match status" value="1"/>
</dbReference>
<comment type="function">
    <text evidence="1">Endonuclease that specifically degrades the RNA of RNA-DNA hybrids.</text>
</comment>
<comment type="catalytic activity">
    <reaction evidence="1">
        <text>Endonucleolytic cleavage to 5'-phosphomonoester.</text>
        <dbReference type="EC" id="3.1.26.4"/>
    </reaction>
</comment>
<comment type="cofactor">
    <cofactor evidence="1">
        <name>Mn(2+)</name>
        <dbReference type="ChEBI" id="CHEBI:29035"/>
    </cofactor>
    <cofactor evidence="1">
        <name>Mg(2+)</name>
        <dbReference type="ChEBI" id="CHEBI:18420"/>
    </cofactor>
    <text evidence="1">Manganese or magnesium. Binds 1 divalent metal ion per monomer in the absence of substrate. May bind a second metal ion after substrate binding.</text>
</comment>
<comment type="subcellular location">
    <subcellularLocation>
        <location evidence="1">Cytoplasm</location>
    </subcellularLocation>
</comment>
<comment type="similarity">
    <text evidence="1">Belongs to the RNase HII family.</text>
</comment>
<protein>
    <recommendedName>
        <fullName evidence="1">Ribonuclease HII</fullName>
        <shortName evidence="1">RNase HII</shortName>
        <ecNumber evidence="1">3.1.26.4</ecNumber>
    </recommendedName>
</protein>
<gene>
    <name evidence="1" type="primary">rnhB</name>
    <name type="synonym">rnh</name>
    <name type="ordered locus">SAV_2453</name>
</gene>
<keyword id="KW-0963">Cytoplasm</keyword>
<keyword id="KW-0255">Endonuclease</keyword>
<keyword id="KW-0378">Hydrolase</keyword>
<keyword id="KW-0464">Manganese</keyword>
<keyword id="KW-0479">Metal-binding</keyword>
<keyword id="KW-0540">Nuclease</keyword>
<keyword id="KW-1185">Reference proteome</keyword>
<name>RNH2_STRAW</name>
<feature type="chain" id="PRO_0000111631" description="Ribonuclease HII">
    <location>
        <begin position="1"/>
        <end position="233"/>
    </location>
</feature>
<feature type="domain" description="RNase H type-2" evidence="2">
    <location>
        <begin position="21"/>
        <end position="211"/>
    </location>
</feature>
<feature type="binding site" evidence="1">
    <location>
        <position position="27"/>
    </location>
    <ligand>
        <name>a divalent metal cation</name>
        <dbReference type="ChEBI" id="CHEBI:60240"/>
    </ligand>
</feature>
<feature type="binding site" evidence="1">
    <location>
        <position position="28"/>
    </location>
    <ligand>
        <name>a divalent metal cation</name>
        <dbReference type="ChEBI" id="CHEBI:60240"/>
    </ligand>
</feature>
<feature type="binding site" evidence="1">
    <location>
        <position position="119"/>
    </location>
    <ligand>
        <name>a divalent metal cation</name>
        <dbReference type="ChEBI" id="CHEBI:60240"/>
    </ligand>
</feature>
<evidence type="ECO:0000255" key="1">
    <source>
        <dbReference type="HAMAP-Rule" id="MF_00052"/>
    </source>
</evidence>
<evidence type="ECO:0000255" key="2">
    <source>
        <dbReference type="PROSITE-ProRule" id="PRU01319"/>
    </source>
</evidence>
<reference key="1">
    <citation type="journal article" date="2001" name="Proc. Natl. Acad. Sci. U.S.A.">
        <title>Genome sequence of an industrial microorganism Streptomyces avermitilis: deducing the ability of producing secondary metabolites.</title>
        <authorList>
            <person name="Omura S."/>
            <person name="Ikeda H."/>
            <person name="Ishikawa J."/>
            <person name="Hanamoto A."/>
            <person name="Takahashi C."/>
            <person name="Shinose M."/>
            <person name="Takahashi Y."/>
            <person name="Horikawa H."/>
            <person name="Nakazawa H."/>
            <person name="Osonoe T."/>
            <person name="Kikuchi H."/>
            <person name="Shiba T."/>
            <person name="Sakaki Y."/>
            <person name="Hattori M."/>
        </authorList>
    </citation>
    <scope>NUCLEOTIDE SEQUENCE [LARGE SCALE GENOMIC DNA]</scope>
    <source>
        <strain>ATCC 31267 / DSM 46492 / JCM 5070 / NBRC 14893 / NCIMB 12804 / NRRL 8165 / MA-4680</strain>
    </source>
</reference>
<reference key="2">
    <citation type="journal article" date="2003" name="Nat. Biotechnol.">
        <title>Complete genome sequence and comparative analysis of the industrial microorganism Streptomyces avermitilis.</title>
        <authorList>
            <person name="Ikeda H."/>
            <person name="Ishikawa J."/>
            <person name="Hanamoto A."/>
            <person name="Shinose M."/>
            <person name="Kikuchi H."/>
            <person name="Shiba T."/>
            <person name="Sakaki Y."/>
            <person name="Hattori M."/>
            <person name="Omura S."/>
        </authorList>
    </citation>
    <scope>NUCLEOTIDE SEQUENCE [LARGE SCALE GENOMIC DNA]</scope>
    <source>
        <strain>ATCC 31267 / DSM 46492 / JCM 5070 / NBRC 14893 / NCIMB 12804 / NRRL 8165 / MA-4680</strain>
    </source>
</reference>
<sequence>MPYEPPTHTVERSLRATTGAKVIAGVDEVGRGAWAGPVTVCAAITGLRRPPEGLTDSKLLTVKRRTVLAEELRKWVTSYALGHASPEEIDALGMTAALRLAAVRALEALPVRPDAVILDGKHDYLGSPWKVRTVIKGDQSCVAVAAASVIAKVQRDKMMAELGIEHADFGFAANAGYPSPVHKAALAERGPTPYHRLSWAYLDALPQWRHLKKVRSWADGSVPEIEGQLGFDF</sequence>